<feature type="initiator methionine" description="Removed" evidence="13">
    <location>
        <position position="1"/>
    </location>
</feature>
<feature type="chain" id="PRO_0000051321" description="U3 small nucleolar RNA-associated protein 15 homolog">
    <location>
        <begin position="2"/>
        <end position="518"/>
    </location>
</feature>
<feature type="repeat" description="WD 1">
    <location>
        <begin position="36"/>
        <end position="75"/>
    </location>
</feature>
<feature type="repeat" description="WD 2">
    <location>
        <begin position="78"/>
        <end position="117"/>
    </location>
</feature>
<feature type="repeat" description="WD 3">
    <location>
        <begin position="120"/>
        <end position="159"/>
    </location>
</feature>
<feature type="repeat" description="WD 4">
    <location>
        <begin position="162"/>
        <end position="202"/>
    </location>
</feature>
<feature type="repeat" description="WD 5">
    <location>
        <begin position="204"/>
        <end position="242"/>
    </location>
</feature>
<feature type="repeat" description="WD 6">
    <location>
        <begin position="246"/>
        <end position="285"/>
    </location>
</feature>
<feature type="repeat" description="WD 7">
    <location>
        <begin position="287"/>
        <end position="326"/>
    </location>
</feature>
<feature type="modified residue" description="N-acetylalanine" evidence="13">
    <location>
        <position position="2"/>
    </location>
</feature>
<feature type="cross-link" description="Glycyl lysine isopeptide (Lys-Gly) (interchain with G-Cter in SUMO2)" evidence="14">
    <location>
        <position position="249"/>
    </location>
</feature>
<feature type="splice variant" id="VSP_055255" description="In isoform 2." evidence="5">
    <location>
        <begin position="1"/>
        <end position="190"/>
    </location>
</feature>
<feature type="splice variant" id="VSP_055256" description="In isoform 3." evidence="5">
    <location>
        <begin position="31"/>
        <end position="49"/>
    </location>
</feature>
<feature type="sequence variant" id="VAR_057621" description="In dbSNP:rs16870608.">
    <original>Y</original>
    <variation>H</variation>
    <location>
        <position position="228"/>
    </location>
</feature>
<feature type="sequence variant" id="VAR_057622" description="In dbSNP:rs35313343.">
    <original>R</original>
    <variation>S</variation>
    <location>
        <position position="332"/>
    </location>
</feature>
<feature type="sequence variant" id="VAR_057623" description="In dbSNP:rs35898225.">
    <original>T</original>
    <variation>P</variation>
    <location>
        <position position="483"/>
    </location>
</feature>
<feature type="sequence conflict" description="In Ref. 1; BAB85020." evidence="6" ref="1">
    <original>F</original>
    <variation>S</variation>
    <location>
        <position position="130"/>
    </location>
</feature>
<feature type="sequence conflict" description="In Ref. 4; CAG33576." evidence="6" ref="4">
    <original>L</original>
    <variation>P</variation>
    <location>
        <position position="313"/>
    </location>
</feature>
<feature type="sequence conflict" description="In Ref. 1; BAB14271." evidence="6" ref="1">
    <original>D</original>
    <variation>G</variation>
    <location>
        <position position="382"/>
    </location>
</feature>
<feature type="sequence conflict" description="In Ref. 1; BAB85020." evidence="6" ref="1">
    <original>E</original>
    <variation>G</variation>
    <location>
        <position position="399"/>
    </location>
</feature>
<feature type="helix" evidence="15">
    <location>
        <begin position="21"/>
        <end position="27"/>
    </location>
</feature>
<feature type="strand" evidence="15">
    <location>
        <begin position="33"/>
        <end position="36"/>
    </location>
</feature>
<feature type="strand" evidence="15">
    <location>
        <begin position="41"/>
        <end position="46"/>
    </location>
</feature>
<feature type="strand" evidence="15">
    <location>
        <begin position="54"/>
        <end position="58"/>
    </location>
</feature>
<feature type="strand" evidence="15">
    <location>
        <begin position="61"/>
        <end position="65"/>
    </location>
</feature>
<feature type="strand" evidence="15">
    <location>
        <begin position="73"/>
        <end position="76"/>
    </location>
</feature>
<feature type="strand" evidence="15">
    <location>
        <begin position="79"/>
        <end position="81"/>
    </location>
</feature>
<feature type="strand" evidence="15">
    <location>
        <begin position="83"/>
        <end position="88"/>
    </location>
</feature>
<feature type="strand" evidence="15">
    <location>
        <begin position="92"/>
        <end position="99"/>
    </location>
</feature>
<feature type="strand" evidence="15">
    <location>
        <begin position="104"/>
        <end position="108"/>
    </location>
</feature>
<feature type="strand" evidence="15">
    <location>
        <begin position="116"/>
        <end position="118"/>
    </location>
</feature>
<feature type="strand" evidence="15">
    <location>
        <begin position="125"/>
        <end position="130"/>
    </location>
</feature>
<feature type="strand" evidence="15">
    <location>
        <begin position="134"/>
        <end position="141"/>
    </location>
</feature>
<feature type="strand" evidence="15">
    <location>
        <begin position="146"/>
        <end position="150"/>
    </location>
</feature>
<feature type="turn" evidence="15">
    <location>
        <begin position="151"/>
        <end position="154"/>
    </location>
</feature>
<feature type="strand" evidence="15">
    <location>
        <begin position="155"/>
        <end position="160"/>
    </location>
</feature>
<feature type="strand" evidence="15">
    <location>
        <begin position="167"/>
        <end position="172"/>
    </location>
</feature>
<feature type="strand" evidence="15">
    <location>
        <begin position="179"/>
        <end position="184"/>
    </location>
</feature>
<feature type="strand" evidence="15">
    <location>
        <begin position="187"/>
        <end position="193"/>
    </location>
</feature>
<feature type="strand" evidence="15">
    <location>
        <begin position="196"/>
        <end position="198"/>
    </location>
</feature>
<feature type="strand" evidence="15">
    <location>
        <begin position="200"/>
        <end position="204"/>
    </location>
</feature>
<feature type="strand" evidence="15">
    <location>
        <begin position="211"/>
        <end position="214"/>
    </location>
</feature>
<feature type="strand" evidence="15">
    <location>
        <begin position="218"/>
        <end position="225"/>
    </location>
</feature>
<feature type="strand" evidence="15">
    <location>
        <begin position="228"/>
        <end position="233"/>
    </location>
</feature>
<feature type="turn" evidence="15">
    <location>
        <begin position="234"/>
        <end position="237"/>
    </location>
</feature>
<feature type="strand" evidence="15">
    <location>
        <begin position="238"/>
        <end position="244"/>
    </location>
</feature>
<feature type="strand" evidence="15">
    <location>
        <begin position="251"/>
        <end position="256"/>
    </location>
</feature>
<feature type="strand" evidence="15">
    <location>
        <begin position="260"/>
        <end position="267"/>
    </location>
</feature>
<feature type="strand" evidence="15">
    <location>
        <begin position="270"/>
        <end position="276"/>
    </location>
</feature>
<feature type="turn" evidence="15">
    <location>
        <begin position="277"/>
        <end position="279"/>
    </location>
</feature>
<feature type="strand" evidence="15">
    <location>
        <begin position="282"/>
        <end position="287"/>
    </location>
</feature>
<feature type="strand" evidence="15">
    <location>
        <begin position="292"/>
        <end position="297"/>
    </location>
</feature>
<feature type="helix" evidence="15">
    <location>
        <begin position="299"/>
        <end position="301"/>
    </location>
</feature>
<feature type="strand" evidence="15">
    <location>
        <begin position="303"/>
        <end position="308"/>
    </location>
</feature>
<feature type="strand" evidence="15">
    <location>
        <begin position="311"/>
        <end position="318"/>
    </location>
</feature>
<keyword id="KW-0002">3D-structure</keyword>
<keyword id="KW-0007">Acetylation</keyword>
<keyword id="KW-0025">Alternative splicing</keyword>
<keyword id="KW-1017">Isopeptide bond</keyword>
<keyword id="KW-0539">Nucleus</keyword>
<keyword id="KW-1267">Proteomics identification</keyword>
<keyword id="KW-1185">Reference proteome</keyword>
<keyword id="KW-0677">Repeat</keyword>
<keyword id="KW-0690">Ribosome biogenesis</keyword>
<keyword id="KW-0698">rRNA processing</keyword>
<keyword id="KW-0804">Transcription</keyword>
<keyword id="KW-0805">Transcription regulation</keyword>
<keyword id="KW-0832">Ubl conjugation</keyword>
<keyword id="KW-0853">WD repeat</keyword>
<evidence type="ECO:0000269" key="1">
    <source>
    </source>
</evidence>
<evidence type="ECO:0000269" key="2">
    <source>
    </source>
</evidence>
<evidence type="ECO:0000269" key="3">
    <source>
    </source>
</evidence>
<evidence type="ECO:0000269" key="4">
    <source>
    </source>
</evidence>
<evidence type="ECO:0000303" key="5">
    <source>
    </source>
</evidence>
<evidence type="ECO:0000305" key="6"/>
<evidence type="ECO:0000305" key="7">
    <source>
    </source>
</evidence>
<evidence type="ECO:0000305" key="8">
    <source>
    </source>
</evidence>
<evidence type="ECO:0000312" key="9">
    <source>
        <dbReference type="HGNC" id="HGNC:25758"/>
    </source>
</evidence>
<evidence type="ECO:0007744" key="10">
    <source>
        <dbReference type="PDB" id="7MQ8"/>
    </source>
</evidence>
<evidence type="ECO:0007744" key="11">
    <source>
        <dbReference type="PDB" id="7MQ9"/>
    </source>
</evidence>
<evidence type="ECO:0007744" key="12">
    <source>
        <dbReference type="PDB" id="7MQA"/>
    </source>
</evidence>
<evidence type="ECO:0007744" key="13">
    <source>
    </source>
</evidence>
<evidence type="ECO:0007744" key="14">
    <source>
    </source>
</evidence>
<evidence type="ECO:0007829" key="15">
    <source>
        <dbReference type="PDB" id="7RUO"/>
    </source>
</evidence>
<organism>
    <name type="scientific">Homo sapiens</name>
    <name type="common">Human</name>
    <dbReference type="NCBI Taxonomy" id="9606"/>
    <lineage>
        <taxon>Eukaryota</taxon>
        <taxon>Metazoa</taxon>
        <taxon>Chordata</taxon>
        <taxon>Craniata</taxon>
        <taxon>Vertebrata</taxon>
        <taxon>Euteleostomi</taxon>
        <taxon>Mammalia</taxon>
        <taxon>Eutheria</taxon>
        <taxon>Euarchontoglires</taxon>
        <taxon>Primates</taxon>
        <taxon>Haplorrhini</taxon>
        <taxon>Catarrhini</taxon>
        <taxon>Hominidae</taxon>
        <taxon>Homo</taxon>
    </lineage>
</organism>
<sequence>MAGYKPVAIQTYPILGEKITQDTLYWNNYKTPVQIKEFGAVSKVDFSPQPPYNYAVTASSRIHIYGRYSQEPIKTFSRFKDTAYCATFRQDGRLLVAGSEDGGVQLFDISGRAPLRQFEGHTKAVHTVDFTADKYHVVSGADDYTVKLWDIPNSKEILTFKEHSDYVRCGCASKLNPDLFITGSYDHTVKMFDARTSESVLSVEHGQPVESVLLFPSGGLLVSAGGRYVKVWDMLKGGQLLVSLKNHHKTVTCLCLSSSGQRLLSGSLDRKVKVYSTTSYKVVHSFDYAASILSLALAHEDETIVVGMTNGILSVKHRKSEAKKESLPRRRRPAYRTFIKGKNYMKQRDDILINRPAKKHLELYDRDLKHFRISKALDRVLDPTCTIKTPEITVSIIKELNRRGVLANALAGRDEKEISHVLNFLIRNLSQPRFAPVLINAAEIIIDIYLPVIGQSPVVDKKFLLLQGLVEKEIDYQRELLETLGMMDMLFATMRRKEGTSVLEHTSDGFPENKKIES</sequence>
<dbReference type="EMBL" id="AK022849">
    <property type="protein sequence ID" value="BAB14271.1"/>
    <property type="status" value="ALT_INIT"/>
    <property type="molecule type" value="mRNA"/>
</dbReference>
<dbReference type="EMBL" id="AK074217">
    <property type="protein sequence ID" value="BAB85020.1"/>
    <property type="status" value="ALT_FRAME"/>
    <property type="molecule type" value="mRNA"/>
</dbReference>
<dbReference type="EMBL" id="AK300525">
    <property type="protein sequence ID" value="BAG62237.1"/>
    <property type="molecule type" value="mRNA"/>
</dbReference>
<dbReference type="EMBL" id="AK302021">
    <property type="protein sequence ID" value="BAG63420.1"/>
    <property type="molecule type" value="mRNA"/>
</dbReference>
<dbReference type="EMBL" id="AC010279">
    <property type="status" value="NOT_ANNOTATED_CDS"/>
    <property type="molecule type" value="Genomic_DNA"/>
</dbReference>
<dbReference type="EMBL" id="BC013064">
    <property type="protein sequence ID" value="AAH13064.1"/>
    <property type="molecule type" value="mRNA"/>
</dbReference>
<dbReference type="EMBL" id="CR457295">
    <property type="protein sequence ID" value="CAG33576.1"/>
    <property type="molecule type" value="mRNA"/>
</dbReference>
<dbReference type="CCDS" id="CCDS34186.1">
    <molecule id="Q8TED0-1"/>
</dbReference>
<dbReference type="CCDS" id="CCDS68893.1">
    <molecule id="Q8TED0-3"/>
</dbReference>
<dbReference type="CCDS" id="CCDS68894.1">
    <molecule id="Q8TED0-2"/>
</dbReference>
<dbReference type="RefSeq" id="NP_001271359.1">
    <molecule id="Q8TED0-3"/>
    <property type="nucleotide sequence ID" value="NM_001284430.1"/>
</dbReference>
<dbReference type="RefSeq" id="NP_001271360.1">
    <molecule id="Q8TED0-2"/>
    <property type="nucleotide sequence ID" value="NM_001284431.1"/>
</dbReference>
<dbReference type="RefSeq" id="NP_115551.2">
    <molecule id="Q8TED0-1"/>
    <property type="nucleotide sequence ID" value="NM_032175.4"/>
</dbReference>
<dbReference type="RefSeq" id="XP_011541982.1">
    <molecule id="Q8TED0-1"/>
    <property type="nucleotide sequence ID" value="XM_011543680.3"/>
</dbReference>
<dbReference type="RefSeq" id="XP_054209656.1">
    <molecule id="Q8TED0-1"/>
    <property type="nucleotide sequence ID" value="XM_054353681.1"/>
</dbReference>
<dbReference type="PDB" id="7MQ8">
    <property type="method" value="EM"/>
    <property type="resolution" value="3.60 A"/>
    <property type="chains" value="LJ=1-518"/>
</dbReference>
<dbReference type="PDB" id="7MQ9">
    <property type="method" value="EM"/>
    <property type="resolution" value="3.87 A"/>
    <property type="chains" value="LJ=1-518"/>
</dbReference>
<dbReference type="PDB" id="7MQA">
    <property type="method" value="EM"/>
    <property type="resolution" value="2.70 A"/>
    <property type="chains" value="LJ=1-518"/>
</dbReference>
<dbReference type="PDB" id="7RUO">
    <property type="method" value="X-ray"/>
    <property type="resolution" value="1.80 A"/>
    <property type="chains" value="A/B=1-370"/>
</dbReference>
<dbReference type="PDBsum" id="7MQ8"/>
<dbReference type="PDBsum" id="7MQ9"/>
<dbReference type="PDBsum" id="7MQA"/>
<dbReference type="PDBsum" id="7RUO"/>
<dbReference type="EMDB" id="EMD-23936"/>
<dbReference type="EMDB" id="EMD-23937"/>
<dbReference type="EMDB" id="EMD-23938"/>
<dbReference type="SMR" id="Q8TED0"/>
<dbReference type="BioGRID" id="123907">
    <property type="interactions" value="126"/>
</dbReference>
<dbReference type="ComplexPortal" id="CPX-2450">
    <property type="entry name" value="UTP-A complex"/>
</dbReference>
<dbReference type="FunCoup" id="Q8TED0">
    <property type="interactions" value="3317"/>
</dbReference>
<dbReference type="IntAct" id="Q8TED0">
    <property type="interactions" value="55"/>
</dbReference>
<dbReference type="MINT" id="Q8TED0"/>
<dbReference type="STRING" id="9606.ENSP00000296792"/>
<dbReference type="GlyGen" id="Q8TED0">
    <property type="glycosylation" value="1 site"/>
</dbReference>
<dbReference type="iPTMnet" id="Q8TED0"/>
<dbReference type="PhosphoSitePlus" id="Q8TED0"/>
<dbReference type="SwissPalm" id="Q8TED0"/>
<dbReference type="BioMuta" id="UTP15"/>
<dbReference type="DMDM" id="296452998"/>
<dbReference type="jPOST" id="Q8TED0"/>
<dbReference type="MassIVE" id="Q8TED0"/>
<dbReference type="PaxDb" id="9606-ENSP00000296792"/>
<dbReference type="PeptideAtlas" id="Q8TED0"/>
<dbReference type="ProteomicsDB" id="5157"/>
<dbReference type="ProteomicsDB" id="5447"/>
<dbReference type="ProteomicsDB" id="74446">
    <molecule id="Q8TED0-1"/>
</dbReference>
<dbReference type="Pumba" id="Q8TED0"/>
<dbReference type="Antibodypedia" id="44207">
    <property type="antibodies" value="60 antibodies from 17 providers"/>
</dbReference>
<dbReference type="DNASU" id="84135"/>
<dbReference type="Ensembl" id="ENST00000296792.9">
    <molecule id="Q8TED0-1"/>
    <property type="protein sequence ID" value="ENSP00000296792.4"/>
    <property type="gene ID" value="ENSG00000164338.10"/>
</dbReference>
<dbReference type="Ensembl" id="ENST00000508491.1">
    <molecule id="Q8TED0-3"/>
    <property type="protein sequence ID" value="ENSP00000424609.1"/>
    <property type="gene ID" value="ENSG00000164338.10"/>
</dbReference>
<dbReference type="Ensembl" id="ENST00000543251.5">
    <molecule id="Q8TED0-2"/>
    <property type="protein sequence ID" value="ENSP00000440796.1"/>
    <property type="gene ID" value="ENSG00000164338.10"/>
</dbReference>
<dbReference type="GeneID" id="84135"/>
<dbReference type="KEGG" id="hsa:84135"/>
<dbReference type="MANE-Select" id="ENST00000296792.9">
    <property type="protein sequence ID" value="ENSP00000296792.4"/>
    <property type="RefSeq nucleotide sequence ID" value="NM_032175.4"/>
    <property type="RefSeq protein sequence ID" value="NP_115551.2"/>
</dbReference>
<dbReference type="UCSC" id="uc003kcw.3">
    <molecule id="Q8TED0-1"/>
    <property type="organism name" value="human"/>
</dbReference>
<dbReference type="AGR" id="HGNC:25758"/>
<dbReference type="CTD" id="84135"/>
<dbReference type="DisGeNET" id="84135"/>
<dbReference type="GeneCards" id="UTP15"/>
<dbReference type="HGNC" id="HGNC:25758">
    <property type="gene designation" value="UTP15"/>
</dbReference>
<dbReference type="HPA" id="ENSG00000164338">
    <property type="expression patterns" value="Tissue enhanced (bone)"/>
</dbReference>
<dbReference type="MIM" id="616194">
    <property type="type" value="gene"/>
</dbReference>
<dbReference type="neXtProt" id="NX_Q8TED0"/>
<dbReference type="OpenTargets" id="ENSG00000164338"/>
<dbReference type="PharmGKB" id="PA142670631"/>
<dbReference type="VEuPathDB" id="HostDB:ENSG00000164338"/>
<dbReference type="eggNOG" id="KOG0267">
    <property type="taxonomic scope" value="Eukaryota"/>
</dbReference>
<dbReference type="eggNOG" id="KOG0310">
    <property type="taxonomic scope" value="Eukaryota"/>
</dbReference>
<dbReference type="GeneTree" id="ENSGT00390000004228"/>
<dbReference type="HOGENOM" id="CLU_021102_4_1_1"/>
<dbReference type="InParanoid" id="Q8TED0"/>
<dbReference type="OMA" id="ATYQVVH"/>
<dbReference type="OrthoDB" id="431715at2759"/>
<dbReference type="PAN-GO" id="Q8TED0">
    <property type="GO annotations" value="3 GO annotations based on evolutionary models"/>
</dbReference>
<dbReference type="PhylomeDB" id="Q8TED0"/>
<dbReference type="TreeFam" id="TF319494"/>
<dbReference type="PathwayCommons" id="Q8TED0"/>
<dbReference type="Reactome" id="R-HSA-6790901">
    <property type="pathway name" value="rRNA modification in the nucleus and cytosol"/>
</dbReference>
<dbReference type="Reactome" id="R-HSA-6791226">
    <property type="pathway name" value="Major pathway of rRNA processing in the nucleolus and cytosol"/>
</dbReference>
<dbReference type="SignaLink" id="Q8TED0"/>
<dbReference type="BioGRID-ORCS" id="84135">
    <property type="hits" value="804 hits in 1163 CRISPR screens"/>
</dbReference>
<dbReference type="CD-CODE" id="232F8A39">
    <property type="entry name" value="P-body"/>
</dbReference>
<dbReference type="CD-CODE" id="91857CE7">
    <property type="entry name" value="Nucleolus"/>
</dbReference>
<dbReference type="ChiTaRS" id="UTP15">
    <property type="organism name" value="human"/>
</dbReference>
<dbReference type="GeneWiki" id="UTP15"/>
<dbReference type="GenomeRNAi" id="84135"/>
<dbReference type="Pharos" id="Q8TED0">
    <property type="development level" value="Tbio"/>
</dbReference>
<dbReference type="PRO" id="PR:Q8TED0"/>
<dbReference type="Proteomes" id="UP000005640">
    <property type="component" value="Chromosome 5"/>
</dbReference>
<dbReference type="RNAct" id="Q8TED0">
    <property type="molecule type" value="protein"/>
</dbReference>
<dbReference type="Bgee" id="ENSG00000164338">
    <property type="expression patterns" value="Expressed in calcaneal tendon and 136 other cell types or tissues"/>
</dbReference>
<dbReference type="ExpressionAtlas" id="Q8TED0">
    <property type="expression patterns" value="baseline and differential"/>
</dbReference>
<dbReference type="GO" id="GO:0005737">
    <property type="term" value="C:cytoplasm"/>
    <property type="evidence" value="ECO:0000314"/>
    <property type="project" value="LIFEdb"/>
</dbReference>
<dbReference type="GO" id="GO:0005783">
    <property type="term" value="C:endoplasmic reticulum"/>
    <property type="evidence" value="ECO:0000314"/>
    <property type="project" value="HPA"/>
</dbReference>
<dbReference type="GO" id="GO:0001650">
    <property type="term" value="C:fibrillar center"/>
    <property type="evidence" value="ECO:0000314"/>
    <property type="project" value="UniProtKB"/>
</dbReference>
<dbReference type="GO" id="GO:0005730">
    <property type="term" value="C:nucleolus"/>
    <property type="evidence" value="ECO:0000314"/>
    <property type="project" value="HPA"/>
</dbReference>
<dbReference type="GO" id="GO:0005654">
    <property type="term" value="C:nucleoplasm"/>
    <property type="evidence" value="ECO:0000304"/>
    <property type="project" value="Reactome"/>
</dbReference>
<dbReference type="GO" id="GO:0032040">
    <property type="term" value="C:small-subunit processome"/>
    <property type="evidence" value="ECO:0000314"/>
    <property type="project" value="UniProtKB"/>
</dbReference>
<dbReference type="GO" id="GO:0003723">
    <property type="term" value="F:RNA binding"/>
    <property type="evidence" value="ECO:0007005"/>
    <property type="project" value="UniProtKB"/>
</dbReference>
<dbReference type="GO" id="GO:2000234">
    <property type="term" value="P:positive regulation of rRNA processing"/>
    <property type="evidence" value="ECO:0000315"/>
    <property type="project" value="UniProtKB"/>
</dbReference>
<dbReference type="GO" id="GO:0045943">
    <property type="term" value="P:positive regulation of transcription by RNA polymerase I"/>
    <property type="evidence" value="ECO:0000315"/>
    <property type="project" value="UniProtKB"/>
</dbReference>
<dbReference type="GO" id="GO:0042274">
    <property type="term" value="P:ribosomal small subunit biogenesis"/>
    <property type="evidence" value="ECO:0000314"/>
    <property type="project" value="UniProtKB"/>
</dbReference>
<dbReference type="GO" id="GO:0006364">
    <property type="term" value="P:rRNA processing"/>
    <property type="evidence" value="ECO:0000318"/>
    <property type="project" value="GO_Central"/>
</dbReference>
<dbReference type="CDD" id="cd00200">
    <property type="entry name" value="WD40"/>
    <property type="match status" value="1"/>
</dbReference>
<dbReference type="FunFam" id="2.130.10.10:FF:000398">
    <property type="entry name" value="U3 small nucleolar RNA-associated protein 15 homolog"/>
    <property type="match status" value="1"/>
</dbReference>
<dbReference type="FunFam" id="2.130.10.10:FF:000448">
    <property type="entry name" value="U3 small nucleolar RNA-associated protein 15 homolog"/>
    <property type="match status" value="1"/>
</dbReference>
<dbReference type="Gene3D" id="2.130.10.10">
    <property type="entry name" value="YVTN repeat-like/Quinoprotein amine dehydrogenase"/>
    <property type="match status" value="2"/>
</dbReference>
<dbReference type="InterPro" id="IPR018983">
    <property type="entry name" value="U3_snoRNA-assocProt_15_C"/>
</dbReference>
<dbReference type="InterPro" id="IPR015943">
    <property type="entry name" value="WD40/YVTN_repeat-like_dom_sf"/>
</dbReference>
<dbReference type="InterPro" id="IPR019775">
    <property type="entry name" value="WD40_repeat_CS"/>
</dbReference>
<dbReference type="InterPro" id="IPR036322">
    <property type="entry name" value="WD40_repeat_dom_sf"/>
</dbReference>
<dbReference type="InterPro" id="IPR001680">
    <property type="entry name" value="WD40_rpt"/>
</dbReference>
<dbReference type="PANTHER" id="PTHR19924:SF26">
    <property type="entry name" value="U3 SMALL NUCLEOLAR RNA-ASSOCIATED PROTEIN 15 HOMOLOG"/>
    <property type="match status" value="1"/>
</dbReference>
<dbReference type="PANTHER" id="PTHR19924">
    <property type="entry name" value="UTP15 U3 SMALL NUCLEOLAR RNA-ASSOCIATED PROTEIN 15 FAMILY MEMBER"/>
    <property type="match status" value="1"/>
</dbReference>
<dbReference type="Pfam" id="PF09384">
    <property type="entry name" value="UTP15_C"/>
    <property type="match status" value="1"/>
</dbReference>
<dbReference type="Pfam" id="PF00400">
    <property type="entry name" value="WD40"/>
    <property type="match status" value="5"/>
</dbReference>
<dbReference type="SMART" id="SM00320">
    <property type="entry name" value="WD40"/>
    <property type="match status" value="6"/>
</dbReference>
<dbReference type="SUPFAM" id="SSF50978">
    <property type="entry name" value="WD40 repeat-like"/>
    <property type="match status" value="1"/>
</dbReference>
<dbReference type="PROSITE" id="PS00678">
    <property type="entry name" value="WD_REPEATS_1"/>
    <property type="match status" value="1"/>
</dbReference>
<dbReference type="PROSITE" id="PS50082">
    <property type="entry name" value="WD_REPEATS_2"/>
    <property type="match status" value="2"/>
</dbReference>
<dbReference type="PROSITE" id="PS50294">
    <property type="entry name" value="WD_REPEATS_REGION"/>
    <property type="match status" value="1"/>
</dbReference>
<gene>
    <name evidence="9" type="primary">UTP15</name>
</gene>
<protein>
    <recommendedName>
        <fullName>U3 small nucleolar RNA-associated protein 15 homolog</fullName>
    </recommendedName>
</protein>
<proteinExistence type="evidence at protein level"/>
<name>UTP15_HUMAN</name>
<accession>Q8TED0</accession>
<accession>B4DU75</accession>
<accession>B4DXK8</accession>
<accession>Q6IA60</accession>
<accession>Q96E08</accession>
<accession>Q9H9F8</accession>
<comment type="function">
    <text evidence="2 4">Ribosome biogenesis factor. Involved in nucleolar processing of pre-18S ribosomal RNA. Required for optimal pre-ribosomal RNA transcription by RNA polymerase I (PubMed:17699751). Part of the small subunit (SSU) processome, first precursor of the small eukaryotic ribosomal subunit. During the assembly of the SSU processome in the nucleolus, many ribosome biogenesis factors, an RNA chaperone and ribosomal proteins associate with the nascent pre-rRNA and work in concert to generate RNA folding, modifications, rearrangements and cleavage as well as targeted degradation of pre-ribosomal RNA by the RNA exosome (PubMed:34516797).</text>
</comment>
<comment type="subunit">
    <text evidence="3 4 7 8">Part of the small subunit (SSU) processome, composed of more than 70 proteins and the RNA chaperone small nucleolar RNA (snoRNA) U3 (PubMed:34516797). May be a component of the proposed t-UTP subcomplex of the ribosomal small subunit (SSU) processome containing at least UTP4, WDR43, HEATR1, UTP15, WDR75 (PubMed:17699751, PubMed:22916032). Interacts directly with UTP4 and WDR43 (PubMed:24219289).</text>
</comment>
<comment type="interaction">
    <interactant intactId="EBI-1048301">
        <id>Q8TED0</id>
    </interactant>
    <interactant intactId="EBI-2602591">
        <id>Q969X6</id>
        <label>UTP4</label>
    </interactant>
    <organismsDiffer>false</organismsDiffer>
    <experiments>5</experiments>
</comment>
<comment type="interaction">
    <interactant intactId="EBI-1048301">
        <id>Q8TED0</id>
    </interactant>
    <interactant intactId="EBI-2563523">
        <id>Q15061</id>
        <label>WDR43</label>
    </interactant>
    <organismsDiffer>false</organismsDiffer>
    <experiments>2</experiments>
</comment>
<comment type="subcellular location">
    <subcellularLocation>
        <location evidence="1 3 4">Nucleus</location>
        <location evidence="1 3 4">Nucleolus</location>
    </subcellularLocation>
    <text evidence="3">Found predominantly at the fibrillar center.</text>
</comment>
<comment type="alternative products">
    <event type="alternative splicing"/>
    <isoform>
        <id>Q8TED0-1</id>
        <name>1</name>
        <sequence type="displayed"/>
    </isoform>
    <isoform>
        <id>Q8TED0-2</id>
        <name>2</name>
        <sequence type="described" ref="VSP_055255"/>
    </isoform>
    <isoform>
        <id>Q8TED0-3</id>
        <name>3</name>
        <sequence type="described" ref="VSP_055256"/>
    </isoform>
</comment>
<comment type="sequence caution" evidence="6">
    <conflict type="erroneous initiation">
        <sequence resource="EMBL-CDS" id="BAB14271"/>
    </conflict>
</comment>
<comment type="sequence caution" evidence="6">
    <conflict type="frameshift">
        <sequence resource="EMBL-CDS" id="BAB85020"/>
    </conflict>
</comment>
<reference key="1">
    <citation type="journal article" date="2004" name="Nat. Genet.">
        <title>Complete sequencing and characterization of 21,243 full-length human cDNAs.</title>
        <authorList>
            <person name="Ota T."/>
            <person name="Suzuki Y."/>
            <person name="Nishikawa T."/>
            <person name="Otsuki T."/>
            <person name="Sugiyama T."/>
            <person name="Irie R."/>
            <person name="Wakamatsu A."/>
            <person name="Hayashi K."/>
            <person name="Sato H."/>
            <person name="Nagai K."/>
            <person name="Kimura K."/>
            <person name="Makita H."/>
            <person name="Sekine M."/>
            <person name="Obayashi M."/>
            <person name="Nishi T."/>
            <person name="Shibahara T."/>
            <person name="Tanaka T."/>
            <person name="Ishii S."/>
            <person name="Yamamoto J."/>
            <person name="Saito K."/>
            <person name="Kawai Y."/>
            <person name="Isono Y."/>
            <person name="Nakamura Y."/>
            <person name="Nagahari K."/>
            <person name="Murakami K."/>
            <person name="Yasuda T."/>
            <person name="Iwayanagi T."/>
            <person name="Wagatsuma M."/>
            <person name="Shiratori A."/>
            <person name="Sudo H."/>
            <person name="Hosoiri T."/>
            <person name="Kaku Y."/>
            <person name="Kodaira H."/>
            <person name="Kondo H."/>
            <person name="Sugawara M."/>
            <person name="Takahashi M."/>
            <person name="Kanda K."/>
            <person name="Yokoi T."/>
            <person name="Furuya T."/>
            <person name="Kikkawa E."/>
            <person name="Omura Y."/>
            <person name="Abe K."/>
            <person name="Kamihara K."/>
            <person name="Katsuta N."/>
            <person name="Sato K."/>
            <person name="Tanikawa M."/>
            <person name="Yamazaki M."/>
            <person name="Ninomiya K."/>
            <person name="Ishibashi T."/>
            <person name="Yamashita H."/>
            <person name="Murakawa K."/>
            <person name="Fujimori K."/>
            <person name="Tanai H."/>
            <person name="Kimata M."/>
            <person name="Watanabe M."/>
            <person name="Hiraoka S."/>
            <person name="Chiba Y."/>
            <person name="Ishida S."/>
            <person name="Ono Y."/>
            <person name="Takiguchi S."/>
            <person name="Watanabe S."/>
            <person name="Yosida M."/>
            <person name="Hotuta T."/>
            <person name="Kusano J."/>
            <person name="Kanehori K."/>
            <person name="Takahashi-Fujii A."/>
            <person name="Hara H."/>
            <person name="Tanase T.-O."/>
            <person name="Nomura Y."/>
            <person name="Togiya S."/>
            <person name="Komai F."/>
            <person name="Hara R."/>
            <person name="Takeuchi K."/>
            <person name="Arita M."/>
            <person name="Imose N."/>
            <person name="Musashino K."/>
            <person name="Yuuki H."/>
            <person name="Oshima A."/>
            <person name="Sasaki N."/>
            <person name="Aotsuka S."/>
            <person name="Yoshikawa Y."/>
            <person name="Matsunawa H."/>
            <person name="Ichihara T."/>
            <person name="Shiohata N."/>
            <person name="Sano S."/>
            <person name="Moriya S."/>
            <person name="Momiyama H."/>
            <person name="Satoh N."/>
            <person name="Takami S."/>
            <person name="Terashima Y."/>
            <person name="Suzuki O."/>
            <person name="Nakagawa S."/>
            <person name="Senoh A."/>
            <person name="Mizoguchi H."/>
            <person name="Goto Y."/>
            <person name="Shimizu F."/>
            <person name="Wakebe H."/>
            <person name="Hishigaki H."/>
            <person name="Watanabe T."/>
            <person name="Sugiyama A."/>
            <person name="Takemoto M."/>
            <person name="Kawakami B."/>
            <person name="Yamazaki M."/>
            <person name="Watanabe K."/>
            <person name="Kumagai A."/>
            <person name="Itakura S."/>
            <person name="Fukuzumi Y."/>
            <person name="Fujimori Y."/>
            <person name="Komiyama M."/>
            <person name="Tashiro H."/>
            <person name="Tanigami A."/>
            <person name="Fujiwara T."/>
            <person name="Ono T."/>
            <person name="Yamada K."/>
            <person name="Fujii Y."/>
            <person name="Ozaki K."/>
            <person name="Hirao M."/>
            <person name="Ohmori Y."/>
            <person name="Kawabata A."/>
            <person name="Hikiji T."/>
            <person name="Kobatake N."/>
            <person name="Inagaki H."/>
            <person name="Ikema Y."/>
            <person name="Okamoto S."/>
            <person name="Okitani R."/>
            <person name="Kawakami T."/>
            <person name="Noguchi S."/>
            <person name="Itoh T."/>
            <person name="Shigeta K."/>
            <person name="Senba T."/>
            <person name="Matsumura K."/>
            <person name="Nakajima Y."/>
            <person name="Mizuno T."/>
            <person name="Morinaga M."/>
            <person name="Sasaki M."/>
            <person name="Togashi T."/>
            <person name="Oyama M."/>
            <person name="Hata H."/>
            <person name="Watanabe M."/>
            <person name="Komatsu T."/>
            <person name="Mizushima-Sugano J."/>
            <person name="Satoh T."/>
            <person name="Shirai Y."/>
            <person name="Takahashi Y."/>
            <person name="Nakagawa K."/>
            <person name="Okumura K."/>
            <person name="Nagase T."/>
            <person name="Nomura N."/>
            <person name="Kikuchi H."/>
            <person name="Masuho Y."/>
            <person name="Yamashita R."/>
            <person name="Nakai K."/>
            <person name="Yada T."/>
            <person name="Nakamura Y."/>
            <person name="Ohara O."/>
            <person name="Isogai T."/>
            <person name="Sugano S."/>
        </authorList>
    </citation>
    <scope>NUCLEOTIDE SEQUENCE [LARGE SCALE MRNA] (ISOFORMS 1; 2 AND 3)</scope>
    <source>
        <tissue>Prostate</tissue>
        <tissue>Testis</tissue>
    </source>
</reference>
<reference key="2">
    <citation type="journal article" date="2004" name="Nature">
        <title>The DNA sequence and comparative analysis of human chromosome 5.</title>
        <authorList>
            <person name="Schmutz J."/>
            <person name="Martin J."/>
            <person name="Terry A."/>
            <person name="Couronne O."/>
            <person name="Grimwood J."/>
            <person name="Lowry S."/>
            <person name="Gordon L.A."/>
            <person name="Scott D."/>
            <person name="Xie G."/>
            <person name="Huang W."/>
            <person name="Hellsten U."/>
            <person name="Tran-Gyamfi M."/>
            <person name="She X."/>
            <person name="Prabhakar S."/>
            <person name="Aerts A."/>
            <person name="Altherr M."/>
            <person name="Bajorek E."/>
            <person name="Black S."/>
            <person name="Branscomb E."/>
            <person name="Caoile C."/>
            <person name="Challacombe J.F."/>
            <person name="Chan Y.M."/>
            <person name="Denys M."/>
            <person name="Detter J.C."/>
            <person name="Escobar J."/>
            <person name="Flowers D."/>
            <person name="Fotopulos D."/>
            <person name="Glavina T."/>
            <person name="Gomez M."/>
            <person name="Gonzales E."/>
            <person name="Goodstein D."/>
            <person name="Grigoriev I."/>
            <person name="Groza M."/>
            <person name="Hammon N."/>
            <person name="Hawkins T."/>
            <person name="Haydu L."/>
            <person name="Israni S."/>
            <person name="Jett J."/>
            <person name="Kadner K."/>
            <person name="Kimball H."/>
            <person name="Kobayashi A."/>
            <person name="Lopez F."/>
            <person name="Lou Y."/>
            <person name="Martinez D."/>
            <person name="Medina C."/>
            <person name="Morgan J."/>
            <person name="Nandkeshwar R."/>
            <person name="Noonan J.P."/>
            <person name="Pitluck S."/>
            <person name="Pollard M."/>
            <person name="Predki P."/>
            <person name="Priest J."/>
            <person name="Ramirez L."/>
            <person name="Retterer J."/>
            <person name="Rodriguez A."/>
            <person name="Rogers S."/>
            <person name="Salamov A."/>
            <person name="Salazar A."/>
            <person name="Thayer N."/>
            <person name="Tice H."/>
            <person name="Tsai M."/>
            <person name="Ustaszewska A."/>
            <person name="Vo N."/>
            <person name="Wheeler J."/>
            <person name="Wu K."/>
            <person name="Yang J."/>
            <person name="Dickson M."/>
            <person name="Cheng J.-F."/>
            <person name="Eichler E.E."/>
            <person name="Olsen A."/>
            <person name="Pennacchio L.A."/>
            <person name="Rokhsar D.S."/>
            <person name="Richardson P."/>
            <person name="Lucas S.M."/>
            <person name="Myers R.M."/>
            <person name="Rubin E.M."/>
        </authorList>
    </citation>
    <scope>NUCLEOTIDE SEQUENCE [LARGE SCALE GENOMIC DNA]</scope>
</reference>
<reference key="3">
    <citation type="journal article" date="2004" name="Genome Res.">
        <title>The status, quality, and expansion of the NIH full-length cDNA project: the Mammalian Gene Collection (MGC).</title>
        <authorList>
            <consortium name="The MGC Project Team"/>
        </authorList>
    </citation>
    <scope>NUCLEOTIDE SEQUENCE [LARGE SCALE MRNA] OF 191-518 (ISOFORM 1/2/3)</scope>
    <source>
        <tissue>Placenta</tissue>
    </source>
</reference>
<reference key="4">
    <citation type="submission" date="2004-06" db="EMBL/GenBank/DDBJ databases">
        <title>Cloning of human full open reading frames in Gateway(TM) system entry vector (pDONR201).</title>
        <authorList>
            <person name="Ebert L."/>
            <person name="Schick M."/>
            <person name="Neubert P."/>
            <person name="Schatten R."/>
            <person name="Henze S."/>
            <person name="Korn B."/>
        </authorList>
    </citation>
    <scope>NUCLEOTIDE SEQUENCE [LARGE SCALE MRNA] OF 234-518 (ISOFORM 1/2/3)</scope>
</reference>
<reference key="5">
    <citation type="journal article" date="2002" name="Mol. Biol. Cell">
        <title>Functional proteomic analysis of human nucleolus.</title>
        <authorList>
            <person name="Scherl A."/>
            <person name="Coute Y."/>
            <person name="Deon C."/>
            <person name="Calle A."/>
            <person name="Kindbeiter K."/>
            <person name="Sanchez J.-C."/>
            <person name="Greco A."/>
            <person name="Hochstrasser D.F."/>
            <person name="Diaz J.-J."/>
        </authorList>
    </citation>
    <scope>SUBCELLULAR LOCATION [LARGE SCALE ANALYSIS]</scope>
    <source>
        <tissue>Cervix carcinoma</tissue>
    </source>
</reference>
<reference key="6">
    <citation type="journal article" date="2007" name="Genes Dev.">
        <title>Recruitment of factors linking transcription and processing of pre-rRNA to NOR chromatin is UBF-dependent and occurs independent of transcription in human cells.</title>
        <authorList>
            <person name="Prieto J.L."/>
            <person name="McStay B."/>
        </authorList>
    </citation>
    <scope>FUNCTION</scope>
    <scope>SUBUNIT</scope>
</reference>
<reference key="7">
    <citation type="journal article" date="2009" name="Anal. Chem.">
        <title>Lys-N and trypsin cover complementary parts of the phosphoproteome in a refined SCX-based approach.</title>
        <authorList>
            <person name="Gauci S."/>
            <person name="Helbig A.O."/>
            <person name="Slijper M."/>
            <person name="Krijgsveld J."/>
            <person name="Heck A.J."/>
            <person name="Mohammed S."/>
        </authorList>
    </citation>
    <scope>ACETYLATION [LARGE SCALE ANALYSIS] AT ALA-2</scope>
    <scope>CLEAVAGE OF INITIATOR METHIONINE [LARGE SCALE ANALYSIS]</scope>
    <scope>IDENTIFICATION BY MASS SPECTROMETRY [LARGE SCALE ANALYSIS]</scope>
</reference>
<reference key="8">
    <citation type="journal article" date="2012" name="PLoS Genet.">
        <title>NOL11, implicated in the pathogenesis of North American Indian childhood cirrhosis, is required for pre-rRNA transcription and processing.</title>
        <authorList>
            <person name="Freed E.F."/>
            <person name="Prieto J.L."/>
            <person name="McCann K.L."/>
            <person name="McStay B."/>
            <person name="Baserga S.J."/>
        </authorList>
    </citation>
    <scope>POSSIBLE ASSOCIATION IN THE SSU PROCESSOME T-UTP SUBCOMPLEX</scope>
</reference>
<reference key="9">
    <citation type="journal article" date="2013" name="Biochem. Cell Biol.">
        <title>Interaction, mobility, and phosphorylation of human orthologues of WD repeat-containing components of the yeast SSU processome t-UTP sub-complex.</title>
        <authorList>
            <person name="Sato M."/>
            <person name="Araki N."/>
            <person name="Kumeta M."/>
            <person name="Takeyasu K."/>
            <person name="Taguchi Y."/>
            <person name="Asai T."/>
            <person name="Furukawa K."/>
            <person name="Horigome T."/>
        </authorList>
    </citation>
    <scope>SUBCELLULAR LOCATION</scope>
    <scope>INTERACTION WITH UTP4 AND WDR43</scope>
</reference>
<reference key="10">
    <citation type="journal article" date="2017" name="Nat. Struct. Mol. Biol.">
        <title>Site-specific mapping of the human SUMO proteome reveals co-modification with phosphorylation.</title>
        <authorList>
            <person name="Hendriks I.A."/>
            <person name="Lyon D."/>
            <person name="Young C."/>
            <person name="Jensen L.J."/>
            <person name="Vertegaal A.C."/>
            <person name="Nielsen M.L."/>
        </authorList>
    </citation>
    <scope>SUMOYLATION [LARGE SCALE ANALYSIS] AT LYS-249</scope>
    <scope>IDENTIFICATION BY MASS SPECTROMETRY [LARGE SCALE ANALYSIS]</scope>
</reference>
<reference evidence="10 11 12" key="11">
    <citation type="journal article" date="2021" name="Science">
        <title>Nucleolar maturation of the human small subunit processome.</title>
        <authorList>
            <person name="Singh S."/>
            <person name="Vanden Broeck A."/>
            <person name="Miller L."/>
            <person name="Chaker-Margot M."/>
            <person name="Klinge S."/>
        </authorList>
    </citation>
    <scope>STRUCTURE BY ELECTRON MICROSCOPY (2.70 ANGSTROMS)</scope>
    <scope>FUNCTION</scope>
    <scope>SUBUNIT</scope>
    <scope>SUBCELLULAR LOCATION</scope>
</reference>